<gene>
    <name evidence="1" type="primary">pheS</name>
    <name type="ordered locus">LBF_0490</name>
</gene>
<accession>B0SBK8</accession>
<name>SYFA_LEPBA</name>
<reference key="1">
    <citation type="journal article" date="2008" name="PLoS ONE">
        <title>Genome sequence of the saprophyte Leptospira biflexa provides insights into the evolution of Leptospira and the pathogenesis of leptospirosis.</title>
        <authorList>
            <person name="Picardeau M."/>
            <person name="Bulach D.M."/>
            <person name="Bouchier C."/>
            <person name="Zuerner R.L."/>
            <person name="Zidane N."/>
            <person name="Wilson P.J."/>
            <person name="Creno S."/>
            <person name="Kuczek E.S."/>
            <person name="Bommezzadri S."/>
            <person name="Davis J.C."/>
            <person name="McGrath A."/>
            <person name="Johnson M.J."/>
            <person name="Boursaux-Eude C."/>
            <person name="Seemann T."/>
            <person name="Rouy Z."/>
            <person name="Coppel R.L."/>
            <person name="Rood J.I."/>
            <person name="Lajus A."/>
            <person name="Davies J.K."/>
            <person name="Medigue C."/>
            <person name="Adler B."/>
        </authorList>
    </citation>
    <scope>NUCLEOTIDE SEQUENCE [LARGE SCALE GENOMIC DNA]</scope>
    <source>
        <strain>Patoc 1 / Ames</strain>
    </source>
</reference>
<protein>
    <recommendedName>
        <fullName evidence="1">Phenylalanine--tRNA ligase alpha subunit</fullName>
        <ecNumber evidence="1">6.1.1.20</ecNumber>
    </recommendedName>
    <alternativeName>
        <fullName evidence="1">Phenylalanyl-tRNA synthetase alpha subunit</fullName>
        <shortName evidence="1">PheRS</shortName>
    </alternativeName>
</protein>
<dbReference type="EC" id="6.1.1.20" evidence="1"/>
<dbReference type="EMBL" id="CP000777">
    <property type="protein sequence ID" value="ABZ93029.1"/>
    <property type="molecule type" value="Genomic_DNA"/>
</dbReference>
<dbReference type="RefSeq" id="WP_012387535.1">
    <property type="nucleotide sequence ID" value="NC_010842.1"/>
</dbReference>
<dbReference type="SMR" id="B0SBK8"/>
<dbReference type="KEGG" id="lbf:LBF_0490"/>
<dbReference type="HOGENOM" id="CLU_025086_0_1_12"/>
<dbReference type="GO" id="GO:0005737">
    <property type="term" value="C:cytoplasm"/>
    <property type="evidence" value="ECO:0007669"/>
    <property type="project" value="UniProtKB-SubCell"/>
</dbReference>
<dbReference type="GO" id="GO:0005524">
    <property type="term" value="F:ATP binding"/>
    <property type="evidence" value="ECO:0007669"/>
    <property type="project" value="UniProtKB-UniRule"/>
</dbReference>
<dbReference type="GO" id="GO:0000287">
    <property type="term" value="F:magnesium ion binding"/>
    <property type="evidence" value="ECO:0007669"/>
    <property type="project" value="UniProtKB-UniRule"/>
</dbReference>
<dbReference type="GO" id="GO:0004826">
    <property type="term" value="F:phenylalanine-tRNA ligase activity"/>
    <property type="evidence" value="ECO:0007669"/>
    <property type="project" value="UniProtKB-UniRule"/>
</dbReference>
<dbReference type="GO" id="GO:0000049">
    <property type="term" value="F:tRNA binding"/>
    <property type="evidence" value="ECO:0007669"/>
    <property type="project" value="InterPro"/>
</dbReference>
<dbReference type="GO" id="GO:0006432">
    <property type="term" value="P:phenylalanyl-tRNA aminoacylation"/>
    <property type="evidence" value="ECO:0007669"/>
    <property type="project" value="UniProtKB-UniRule"/>
</dbReference>
<dbReference type="CDD" id="cd00496">
    <property type="entry name" value="PheRS_alpha_core"/>
    <property type="match status" value="1"/>
</dbReference>
<dbReference type="FunFam" id="3.30.930.10:FF:000089">
    <property type="entry name" value="Phenylalanine--tRNA ligase alpha subunit"/>
    <property type="match status" value="1"/>
</dbReference>
<dbReference type="Gene3D" id="3.30.930.10">
    <property type="entry name" value="Bira Bifunctional Protein, Domain 2"/>
    <property type="match status" value="1"/>
</dbReference>
<dbReference type="HAMAP" id="MF_00281">
    <property type="entry name" value="Phe_tRNA_synth_alpha1"/>
    <property type="match status" value="1"/>
</dbReference>
<dbReference type="InterPro" id="IPR006195">
    <property type="entry name" value="aa-tRNA-synth_II"/>
</dbReference>
<dbReference type="InterPro" id="IPR045864">
    <property type="entry name" value="aa-tRNA-synth_II/BPL/LPL"/>
</dbReference>
<dbReference type="InterPro" id="IPR004529">
    <property type="entry name" value="Phe-tRNA-synth_IIc_asu"/>
</dbReference>
<dbReference type="InterPro" id="IPR004188">
    <property type="entry name" value="Phe-tRNA_ligase_II_N"/>
</dbReference>
<dbReference type="InterPro" id="IPR022911">
    <property type="entry name" value="Phe_tRNA_ligase_alpha1_bac"/>
</dbReference>
<dbReference type="InterPro" id="IPR002319">
    <property type="entry name" value="Phenylalanyl-tRNA_Synthase"/>
</dbReference>
<dbReference type="InterPro" id="IPR010978">
    <property type="entry name" value="tRNA-bd_arm"/>
</dbReference>
<dbReference type="NCBIfam" id="TIGR00468">
    <property type="entry name" value="pheS"/>
    <property type="match status" value="1"/>
</dbReference>
<dbReference type="PANTHER" id="PTHR11538:SF41">
    <property type="entry name" value="PHENYLALANINE--TRNA LIGASE, MITOCHONDRIAL"/>
    <property type="match status" value="1"/>
</dbReference>
<dbReference type="PANTHER" id="PTHR11538">
    <property type="entry name" value="PHENYLALANYL-TRNA SYNTHETASE"/>
    <property type="match status" value="1"/>
</dbReference>
<dbReference type="Pfam" id="PF02912">
    <property type="entry name" value="Phe_tRNA-synt_N"/>
    <property type="match status" value="1"/>
</dbReference>
<dbReference type="Pfam" id="PF01409">
    <property type="entry name" value="tRNA-synt_2d"/>
    <property type="match status" value="1"/>
</dbReference>
<dbReference type="SUPFAM" id="SSF55681">
    <property type="entry name" value="Class II aaRS and biotin synthetases"/>
    <property type="match status" value="1"/>
</dbReference>
<dbReference type="SUPFAM" id="SSF46589">
    <property type="entry name" value="tRNA-binding arm"/>
    <property type="match status" value="1"/>
</dbReference>
<dbReference type="PROSITE" id="PS50862">
    <property type="entry name" value="AA_TRNA_LIGASE_II"/>
    <property type="match status" value="1"/>
</dbReference>
<keyword id="KW-0030">Aminoacyl-tRNA synthetase</keyword>
<keyword id="KW-0067">ATP-binding</keyword>
<keyword id="KW-0963">Cytoplasm</keyword>
<keyword id="KW-0436">Ligase</keyword>
<keyword id="KW-0460">Magnesium</keyword>
<keyword id="KW-0479">Metal-binding</keyword>
<keyword id="KW-0547">Nucleotide-binding</keyword>
<keyword id="KW-0648">Protein biosynthesis</keyword>
<sequence>MSLSQEIVSLVKEAETVLSSATTEQELDALKNQFLGKKGKLTSVLKGLASLTVEEKKTVGKEANEAQTKLEQFVEAKRTILKESFYENQLGKESFDTLRPLPKKERGSLHPISQIQYEIEDIFTSMGFSVMDGPEVETDENNFGALNFTEDHPARDMQDTFYTVDGNLLRTHTSAIQVRALRKLKPPFRIIAPGRVFRYEEVDASHENTFYQVEGMVVGENISVAHLIYTMETLLSRVFRKEIKTRLRPGYFPFVEPGFELDINCLVCSGDGCSVCKQSGWLELLPCGLVHPNVLEAAGLDSKKWTGFAFGLGLDRLVMMRYGIHDIRYFQSGNLRFLKQF</sequence>
<proteinExistence type="inferred from homology"/>
<feature type="chain" id="PRO_1000114886" description="Phenylalanine--tRNA ligase alpha subunit">
    <location>
        <begin position="1"/>
        <end position="341"/>
    </location>
</feature>
<feature type="binding site" evidence="1">
    <location>
        <position position="256"/>
    </location>
    <ligand>
        <name>Mg(2+)</name>
        <dbReference type="ChEBI" id="CHEBI:18420"/>
        <note>shared with beta subunit</note>
    </ligand>
</feature>
<comment type="catalytic activity">
    <reaction evidence="1">
        <text>tRNA(Phe) + L-phenylalanine + ATP = L-phenylalanyl-tRNA(Phe) + AMP + diphosphate + H(+)</text>
        <dbReference type="Rhea" id="RHEA:19413"/>
        <dbReference type="Rhea" id="RHEA-COMP:9668"/>
        <dbReference type="Rhea" id="RHEA-COMP:9699"/>
        <dbReference type="ChEBI" id="CHEBI:15378"/>
        <dbReference type="ChEBI" id="CHEBI:30616"/>
        <dbReference type="ChEBI" id="CHEBI:33019"/>
        <dbReference type="ChEBI" id="CHEBI:58095"/>
        <dbReference type="ChEBI" id="CHEBI:78442"/>
        <dbReference type="ChEBI" id="CHEBI:78531"/>
        <dbReference type="ChEBI" id="CHEBI:456215"/>
        <dbReference type="EC" id="6.1.1.20"/>
    </reaction>
</comment>
<comment type="cofactor">
    <cofactor evidence="1">
        <name>Mg(2+)</name>
        <dbReference type="ChEBI" id="CHEBI:18420"/>
    </cofactor>
    <text evidence="1">Binds 2 magnesium ions per tetramer.</text>
</comment>
<comment type="subunit">
    <text evidence="1">Tetramer of two alpha and two beta subunits.</text>
</comment>
<comment type="subcellular location">
    <subcellularLocation>
        <location evidence="1">Cytoplasm</location>
    </subcellularLocation>
</comment>
<comment type="similarity">
    <text evidence="1">Belongs to the class-II aminoacyl-tRNA synthetase family. Phe-tRNA synthetase alpha subunit type 1 subfamily.</text>
</comment>
<organism>
    <name type="scientific">Leptospira biflexa serovar Patoc (strain Patoc 1 / Ames)</name>
    <dbReference type="NCBI Taxonomy" id="355278"/>
    <lineage>
        <taxon>Bacteria</taxon>
        <taxon>Pseudomonadati</taxon>
        <taxon>Spirochaetota</taxon>
        <taxon>Spirochaetia</taxon>
        <taxon>Leptospirales</taxon>
        <taxon>Leptospiraceae</taxon>
        <taxon>Leptospira</taxon>
    </lineage>
</organism>
<evidence type="ECO:0000255" key="1">
    <source>
        <dbReference type="HAMAP-Rule" id="MF_00281"/>
    </source>
</evidence>